<proteinExistence type="evidence at protein level"/>
<gene>
    <name type="primary">ZSD1</name>
</gene>
<keyword id="KW-0520">NAD</keyword>
<keyword id="KW-0560">Oxidoreductase</keyword>
<organism>
    <name type="scientific">Zingiber zerumbet</name>
    <name type="common">Shampoo ginger</name>
    <name type="synonym">Amomum zerumbet</name>
    <dbReference type="NCBI Taxonomy" id="311405"/>
    <lineage>
        <taxon>Eukaryota</taxon>
        <taxon>Viridiplantae</taxon>
        <taxon>Streptophyta</taxon>
        <taxon>Embryophyta</taxon>
        <taxon>Tracheophyta</taxon>
        <taxon>Spermatophyta</taxon>
        <taxon>Magnoliopsida</taxon>
        <taxon>Liliopsida</taxon>
        <taxon>Zingiberales</taxon>
        <taxon>Zingiberaceae</taxon>
        <taxon>Zingiber</taxon>
    </lineage>
</organism>
<protein>
    <recommendedName>
        <fullName>Zerumbone synthase</fullName>
        <ecNumber>1.1.1.326</ecNumber>
    </recommendedName>
</protein>
<evidence type="ECO:0000250" key="1"/>
<evidence type="ECO:0000269" key="2">
    <source>
    </source>
</evidence>
<evidence type="ECO:0000305" key="3"/>
<sequence>MRLEGKVALVTGGASGIGESIARLFIEHGAKICIVDVQDELGQQVSQRLGGDPHACYFHCDVTVEDDVRRAVDFTAEKYGTIDIMVNNAGITGDKVIDIRDADFNEFKKVFDINVNGVFLGMKHAARIMIPKMKGSIVSLASVSSVIAGAGPHGYTGAKHAVVGLTKSVAAELGRHGIRVNCVSPYAVPTRLSMPYLPESEMQEDALRGFLTFVRSNANLKGVDLMPNDVAEAVLYLATEESKYVSGLNLVIDGGFSIANHTLQVFE</sequence>
<comment type="function">
    <text evidence="2">Catalyzes 8-hydroxy-alpha-humulene into zerumbone in presence of NAD. Also converts borneol to camphor in vitro. Zerumbone is a highly promising multi-anticancer agent.</text>
</comment>
<comment type="catalytic activity">
    <reaction evidence="2">
        <text>10-hydroxy-alpha-humulene + NAD(+) = zerumbone + NADH + H(+)</text>
        <dbReference type="Rhea" id="RHEA:32327"/>
        <dbReference type="ChEBI" id="CHEBI:15378"/>
        <dbReference type="ChEBI" id="CHEBI:57540"/>
        <dbReference type="ChEBI" id="CHEBI:57945"/>
        <dbReference type="ChEBI" id="CHEBI:63892"/>
        <dbReference type="ChEBI" id="CHEBI:63893"/>
        <dbReference type="EC" id="1.1.1.326"/>
    </reaction>
</comment>
<comment type="biophysicochemical properties">
    <kinetics>
        <KM evidence="2">27.3 uM for NAD</KM>
        <KM evidence="2">58.5 uM for 8-hydroxy-alpha-humulene</KM>
        <KM evidence="2">22.8 uM for borneol</KM>
        <text>kcat is 3.8 sec(-1) with NAD as substrate. kcat is 1.3 sec(-1) with 8-hydroxy-alpha-humulene as substrate. kcat is 4.1 sec(-1) with borneol as substrate.</text>
    </kinetics>
</comment>
<comment type="tissue specificity">
    <text evidence="2">Expressed in leaves, stems and rhizomes.</text>
</comment>
<comment type="similarity">
    <text evidence="3">Belongs to the short-chain dehydrogenases/reductases (SDR) family.</text>
</comment>
<reference key="1">
    <citation type="journal article" date="2011" name="FEBS J.">
        <title>A short-chain dehydrogenase involved in terpene metabolism from Zingiber zerumbet.</title>
        <authorList>
            <person name="Okamoto S."/>
            <person name="Yu F."/>
            <person name="Harada H."/>
            <person name="Okajima T."/>
            <person name="Hattan J."/>
            <person name="Misawa N."/>
            <person name="Utsumi R."/>
        </authorList>
    </citation>
    <scope>NUCLEOTIDE SEQUENCE [MRNA]</scope>
    <scope>FUNCTION</scope>
    <scope>CATALYTIC ACTIVITY</scope>
    <scope>BIOPHYSICOCHEMICAL PROPERTIES</scope>
    <scope>TISSUE SPECIFICITY</scope>
    <scope>MUTAGENESIS OF SER-142; SER-144; TYR-155 AND LYS-159</scope>
</reference>
<accession>F1SWA0</accession>
<feature type="chain" id="PRO_0000418748" description="Zerumbone synthase">
    <location>
        <begin position="1"/>
        <end position="267"/>
    </location>
</feature>
<feature type="active site" description="Proton acceptor" evidence="3">
    <location>
        <position position="155"/>
    </location>
</feature>
<feature type="binding site" evidence="1">
    <location>
        <begin position="9"/>
        <end position="33"/>
    </location>
    <ligand>
        <name>NAD(+)</name>
        <dbReference type="ChEBI" id="CHEBI:57540"/>
    </ligand>
</feature>
<feature type="binding site" evidence="3">
    <location>
        <position position="142"/>
    </location>
    <ligand>
        <name>substrate</name>
    </ligand>
</feature>
<feature type="mutagenesis site" description="Strong reduction in oxidoreductase activity toward 8-hydroxy-alpha-humulene and borneol." evidence="2">
    <original>S</original>
    <variation>A</variation>
    <location>
        <position position="142"/>
    </location>
</feature>
<feature type="mutagenesis site" description="Increased oxidoreductase activity toward 8-hydroxy-alpha-humulene and borneol." evidence="2">
    <original>S</original>
    <variation>A</variation>
    <location>
        <position position="144"/>
    </location>
</feature>
<feature type="mutagenesis site" description="Strong reduction in oxidoreductase activity toward 8-hydroxy-alpha-humulene and borneol." evidence="2">
    <original>Y</original>
    <variation>A</variation>
    <location>
        <position position="155"/>
    </location>
</feature>
<feature type="mutagenesis site" description="Abolishes all oxidoreductase activity." evidence="2">
    <original>K</original>
    <variation>A</variation>
    <location>
        <position position="159"/>
    </location>
</feature>
<name>ZERSY_ZINZE</name>
<dbReference type="EC" id="1.1.1.326"/>
<dbReference type="EMBL" id="AB480831">
    <property type="protein sequence ID" value="BAK09296.1"/>
    <property type="molecule type" value="mRNA"/>
</dbReference>
<dbReference type="SMR" id="F1SWA0"/>
<dbReference type="KEGG" id="ag:BAK09296"/>
<dbReference type="BioCyc" id="MetaCyc:MONOMER-16689"/>
<dbReference type="BRENDA" id="1.1.1.326">
    <property type="organism ID" value="12510"/>
</dbReference>
<dbReference type="GO" id="GO:0005829">
    <property type="term" value="C:cytosol"/>
    <property type="evidence" value="ECO:0007669"/>
    <property type="project" value="TreeGrafter"/>
</dbReference>
<dbReference type="GO" id="GO:0010301">
    <property type="term" value="F:xanthoxin dehydrogenase (NAD+) activity"/>
    <property type="evidence" value="ECO:0007669"/>
    <property type="project" value="TreeGrafter"/>
</dbReference>
<dbReference type="GO" id="GO:0102069">
    <property type="term" value="F:zerumbone synthase activity"/>
    <property type="evidence" value="ECO:0007669"/>
    <property type="project" value="UniProtKB-EC"/>
</dbReference>
<dbReference type="GO" id="GO:0009688">
    <property type="term" value="P:abscisic acid biosynthetic process"/>
    <property type="evidence" value="ECO:0007669"/>
    <property type="project" value="TreeGrafter"/>
</dbReference>
<dbReference type="CDD" id="cd05326">
    <property type="entry name" value="secoisolariciresinol-DH_like_SDR_c"/>
    <property type="match status" value="1"/>
</dbReference>
<dbReference type="FunFam" id="3.40.50.720:FF:000084">
    <property type="entry name" value="Short-chain dehydrogenase reductase"/>
    <property type="match status" value="1"/>
</dbReference>
<dbReference type="Gene3D" id="3.40.50.720">
    <property type="entry name" value="NAD(P)-binding Rossmann-like Domain"/>
    <property type="match status" value="1"/>
</dbReference>
<dbReference type="InterPro" id="IPR045309">
    <property type="entry name" value="ABA2-like"/>
</dbReference>
<dbReference type="InterPro" id="IPR036291">
    <property type="entry name" value="NAD(P)-bd_dom_sf"/>
</dbReference>
<dbReference type="InterPro" id="IPR002347">
    <property type="entry name" value="SDR_fam"/>
</dbReference>
<dbReference type="NCBIfam" id="NF005559">
    <property type="entry name" value="PRK07231.1"/>
    <property type="match status" value="1"/>
</dbReference>
<dbReference type="PANTHER" id="PTHR42820">
    <property type="entry name" value="SHORT-CHAIN DEHYDROGENASE REDUCTASE"/>
    <property type="match status" value="1"/>
</dbReference>
<dbReference type="PANTHER" id="PTHR42820:SF1">
    <property type="entry name" value="SHORT-CHAIN DEHYDROGENASE_REDUCTASE FAMILY PROTEIN"/>
    <property type="match status" value="1"/>
</dbReference>
<dbReference type="Pfam" id="PF13561">
    <property type="entry name" value="adh_short_C2"/>
    <property type="match status" value="1"/>
</dbReference>
<dbReference type="PRINTS" id="PR00081">
    <property type="entry name" value="GDHRDH"/>
</dbReference>
<dbReference type="PRINTS" id="PR00080">
    <property type="entry name" value="SDRFAMILY"/>
</dbReference>
<dbReference type="SUPFAM" id="SSF51735">
    <property type="entry name" value="NAD(P)-binding Rossmann-fold domains"/>
    <property type="match status" value="1"/>
</dbReference>